<gene>
    <name evidence="1" type="primary">leuC</name>
    <name type="ordered locus">CFF8240_0195</name>
</gene>
<accession>A0RMG7</accession>
<name>LEUC_CAMFF</name>
<comment type="function">
    <text evidence="1">Catalyzes the isomerization between 2-isopropylmalate and 3-isopropylmalate, via the formation of 2-isopropylmaleate.</text>
</comment>
<comment type="catalytic activity">
    <reaction evidence="1">
        <text>(2R,3S)-3-isopropylmalate = (2S)-2-isopropylmalate</text>
        <dbReference type="Rhea" id="RHEA:32287"/>
        <dbReference type="ChEBI" id="CHEBI:1178"/>
        <dbReference type="ChEBI" id="CHEBI:35121"/>
        <dbReference type="EC" id="4.2.1.33"/>
    </reaction>
</comment>
<comment type="cofactor">
    <cofactor evidence="1">
        <name>[4Fe-4S] cluster</name>
        <dbReference type="ChEBI" id="CHEBI:49883"/>
    </cofactor>
    <text evidence="1">Binds 1 [4Fe-4S] cluster per subunit.</text>
</comment>
<comment type="pathway">
    <text evidence="1">Amino-acid biosynthesis; L-leucine biosynthesis; L-leucine from 3-methyl-2-oxobutanoate: step 2/4.</text>
</comment>
<comment type="subunit">
    <text evidence="1">Heterodimer of LeuC and LeuD.</text>
</comment>
<comment type="similarity">
    <text evidence="1">Belongs to the aconitase/IPM isomerase family. LeuC type 2 subfamily.</text>
</comment>
<evidence type="ECO:0000255" key="1">
    <source>
        <dbReference type="HAMAP-Rule" id="MF_01027"/>
    </source>
</evidence>
<sequence>MKQTITEKIFSEHVQHAVYAGQIVETKIDMVIGNDITTPISIRAFKESGAKKLANPDGFAIVMDHYIPAKDIASANQAKISRDFAYEHDLKNFFDEKDMGIEHALMPEKGLVVPGDVIIGADSHTCTHGALGAFSTGMGSTDLAYAMITGKNWFKVPATIKVEFVGKPAKHIYGKDLILEVIRQIGVDGALYKALEFCGDAMKYLDMDSRFSLCNMAIEAGGKSGIIAVDDITKEFLESKNLRSKPKFHYSDEGANYEQVLRIDVSKLDPVIAYPFLPSNGKSINEALKDDLKIDQVFIGSCTNGRLSDLRIAARILKGKRVAKHTRLIITPATQKIALAAQKEGLMDIFVEAGAVVSNPTCGACLGGYMGILGAGERCVSTTNRNFVGRMGDRTSEVYLANSAVAAASAIAGKIADPRVL</sequence>
<reference key="1">
    <citation type="submission" date="2006-11" db="EMBL/GenBank/DDBJ databases">
        <title>Sequence of Campylobacter fetus subsp. fetus 82-40.</title>
        <authorList>
            <person name="Fouts D.E."/>
            <person name="Nelson K.E."/>
        </authorList>
    </citation>
    <scope>NUCLEOTIDE SEQUENCE [LARGE SCALE GENOMIC DNA]</scope>
    <source>
        <strain>82-40</strain>
    </source>
</reference>
<organism>
    <name type="scientific">Campylobacter fetus subsp. fetus (strain 82-40)</name>
    <dbReference type="NCBI Taxonomy" id="360106"/>
    <lineage>
        <taxon>Bacteria</taxon>
        <taxon>Pseudomonadati</taxon>
        <taxon>Campylobacterota</taxon>
        <taxon>Epsilonproteobacteria</taxon>
        <taxon>Campylobacterales</taxon>
        <taxon>Campylobacteraceae</taxon>
        <taxon>Campylobacter</taxon>
    </lineage>
</organism>
<feature type="chain" id="PRO_1000063641" description="3-isopropylmalate dehydratase large subunit">
    <location>
        <begin position="1"/>
        <end position="421"/>
    </location>
</feature>
<feature type="binding site" evidence="1">
    <location>
        <position position="302"/>
    </location>
    <ligand>
        <name>[4Fe-4S] cluster</name>
        <dbReference type="ChEBI" id="CHEBI:49883"/>
    </ligand>
</feature>
<feature type="binding site" evidence="1">
    <location>
        <position position="362"/>
    </location>
    <ligand>
        <name>[4Fe-4S] cluster</name>
        <dbReference type="ChEBI" id="CHEBI:49883"/>
    </ligand>
</feature>
<feature type="binding site" evidence="1">
    <location>
        <position position="365"/>
    </location>
    <ligand>
        <name>[4Fe-4S] cluster</name>
        <dbReference type="ChEBI" id="CHEBI:49883"/>
    </ligand>
</feature>
<proteinExistence type="inferred from homology"/>
<keyword id="KW-0004">4Fe-4S</keyword>
<keyword id="KW-0028">Amino-acid biosynthesis</keyword>
<keyword id="KW-0100">Branched-chain amino acid biosynthesis</keyword>
<keyword id="KW-0408">Iron</keyword>
<keyword id="KW-0411">Iron-sulfur</keyword>
<keyword id="KW-0432">Leucine biosynthesis</keyword>
<keyword id="KW-0456">Lyase</keyword>
<keyword id="KW-0479">Metal-binding</keyword>
<dbReference type="EC" id="4.2.1.33" evidence="1"/>
<dbReference type="EMBL" id="CP000487">
    <property type="protein sequence ID" value="ABK82418.1"/>
    <property type="molecule type" value="Genomic_DNA"/>
</dbReference>
<dbReference type="RefSeq" id="WP_002848215.1">
    <property type="nucleotide sequence ID" value="NC_008599.1"/>
</dbReference>
<dbReference type="SMR" id="A0RMG7"/>
<dbReference type="GeneID" id="61064040"/>
<dbReference type="KEGG" id="cff:CFF8240_0195"/>
<dbReference type="eggNOG" id="COG0065">
    <property type="taxonomic scope" value="Bacteria"/>
</dbReference>
<dbReference type="HOGENOM" id="CLU_006714_3_4_7"/>
<dbReference type="UniPathway" id="UPA00048">
    <property type="reaction ID" value="UER00071"/>
</dbReference>
<dbReference type="Proteomes" id="UP000000760">
    <property type="component" value="Chromosome"/>
</dbReference>
<dbReference type="GO" id="GO:0003861">
    <property type="term" value="F:3-isopropylmalate dehydratase activity"/>
    <property type="evidence" value="ECO:0007669"/>
    <property type="project" value="UniProtKB-UniRule"/>
</dbReference>
<dbReference type="GO" id="GO:0051539">
    <property type="term" value="F:4 iron, 4 sulfur cluster binding"/>
    <property type="evidence" value="ECO:0007669"/>
    <property type="project" value="UniProtKB-KW"/>
</dbReference>
<dbReference type="GO" id="GO:0046872">
    <property type="term" value="F:metal ion binding"/>
    <property type="evidence" value="ECO:0007669"/>
    <property type="project" value="UniProtKB-KW"/>
</dbReference>
<dbReference type="GO" id="GO:0009098">
    <property type="term" value="P:L-leucine biosynthetic process"/>
    <property type="evidence" value="ECO:0007669"/>
    <property type="project" value="UniProtKB-UniRule"/>
</dbReference>
<dbReference type="CDD" id="cd01583">
    <property type="entry name" value="IPMI"/>
    <property type="match status" value="1"/>
</dbReference>
<dbReference type="Gene3D" id="3.30.499.10">
    <property type="entry name" value="Aconitase, domain 3"/>
    <property type="match status" value="2"/>
</dbReference>
<dbReference type="HAMAP" id="MF_01027">
    <property type="entry name" value="LeuC_type2"/>
    <property type="match status" value="1"/>
</dbReference>
<dbReference type="InterPro" id="IPR015931">
    <property type="entry name" value="Acnase/IPM_dHydase_lsu_aba_1/3"/>
</dbReference>
<dbReference type="InterPro" id="IPR001030">
    <property type="entry name" value="Acoase/IPM_deHydtase_lsu_aba"/>
</dbReference>
<dbReference type="InterPro" id="IPR018136">
    <property type="entry name" value="Aconitase_4Fe-4S_BS"/>
</dbReference>
<dbReference type="InterPro" id="IPR036008">
    <property type="entry name" value="Aconitase_4Fe-4S_dom"/>
</dbReference>
<dbReference type="InterPro" id="IPR011826">
    <property type="entry name" value="HAcnase/IPMdehydase_lsu_prok"/>
</dbReference>
<dbReference type="InterPro" id="IPR006251">
    <property type="entry name" value="Homoacnase/IPMdehydase_lsu"/>
</dbReference>
<dbReference type="InterPro" id="IPR050067">
    <property type="entry name" value="IPM_dehydratase_rel_enz"/>
</dbReference>
<dbReference type="InterPro" id="IPR033941">
    <property type="entry name" value="IPMI_cat"/>
</dbReference>
<dbReference type="InterPro" id="IPR011823">
    <property type="entry name" value="IsopropMal_deHydtase_lsu_bac"/>
</dbReference>
<dbReference type="NCBIfam" id="TIGR01343">
    <property type="entry name" value="hacA_fam"/>
    <property type="match status" value="1"/>
</dbReference>
<dbReference type="NCBIfam" id="TIGR02086">
    <property type="entry name" value="IPMI_arch"/>
    <property type="match status" value="1"/>
</dbReference>
<dbReference type="NCBIfam" id="TIGR02083">
    <property type="entry name" value="LEU2"/>
    <property type="match status" value="1"/>
</dbReference>
<dbReference type="NCBIfam" id="NF001614">
    <property type="entry name" value="PRK00402.1"/>
    <property type="match status" value="1"/>
</dbReference>
<dbReference type="PANTHER" id="PTHR43822:SF16">
    <property type="entry name" value="3-ISOPROPYLMALATE DEHYDRATASE LARGE SUBUNIT 2"/>
    <property type="match status" value="1"/>
</dbReference>
<dbReference type="PANTHER" id="PTHR43822">
    <property type="entry name" value="HOMOACONITASE, MITOCHONDRIAL-RELATED"/>
    <property type="match status" value="1"/>
</dbReference>
<dbReference type="Pfam" id="PF00330">
    <property type="entry name" value="Aconitase"/>
    <property type="match status" value="1"/>
</dbReference>
<dbReference type="PRINTS" id="PR00415">
    <property type="entry name" value="ACONITASE"/>
</dbReference>
<dbReference type="SUPFAM" id="SSF53732">
    <property type="entry name" value="Aconitase iron-sulfur domain"/>
    <property type="match status" value="1"/>
</dbReference>
<dbReference type="PROSITE" id="PS00450">
    <property type="entry name" value="ACONITASE_1"/>
    <property type="match status" value="1"/>
</dbReference>
<dbReference type="PROSITE" id="PS01244">
    <property type="entry name" value="ACONITASE_2"/>
    <property type="match status" value="1"/>
</dbReference>
<protein>
    <recommendedName>
        <fullName evidence="1">3-isopropylmalate dehydratase large subunit</fullName>
        <ecNumber evidence="1">4.2.1.33</ecNumber>
    </recommendedName>
    <alternativeName>
        <fullName evidence="1">Alpha-IPM isomerase</fullName>
        <shortName evidence="1">IPMI</shortName>
    </alternativeName>
    <alternativeName>
        <fullName evidence="1">Isopropylmalate isomerase</fullName>
    </alternativeName>
</protein>